<feature type="signal peptide" evidence="1">
    <location>
        <begin position="1"/>
        <end position="16"/>
    </location>
</feature>
<feature type="chain" id="PRO_0000023282" description="OV-16 antigen">
    <location>
        <begin position="17"/>
        <end position="197"/>
    </location>
</feature>
<feature type="glycosylation site" description="N-linked (GlcNAc...) asparagine" evidence="1">
    <location>
        <position position="56"/>
    </location>
</feature>
<feature type="glycosylation site" description="N-linked (GlcNAc...) asparagine" evidence="1">
    <location>
        <position position="61"/>
    </location>
</feature>
<feature type="glycosylation site" description="N-linked (GlcNAc...) asparagine" evidence="1">
    <location>
        <position position="119"/>
    </location>
</feature>
<feature type="glycosylation site" description="N-linked (GlcNAc...) asparagine" evidence="1">
    <location>
        <position position="124"/>
    </location>
</feature>
<name>OV16_ONCVO</name>
<accession>P31729</accession>
<evidence type="ECO:0000255" key="1"/>
<evidence type="ECO:0000305" key="2"/>
<gene>
    <name type="primary">OV16</name>
</gene>
<organism>
    <name type="scientific">Onchocerca volvulus</name>
    <dbReference type="NCBI Taxonomy" id="6282"/>
    <lineage>
        <taxon>Eukaryota</taxon>
        <taxon>Metazoa</taxon>
        <taxon>Ecdysozoa</taxon>
        <taxon>Nematoda</taxon>
        <taxon>Chromadorea</taxon>
        <taxon>Rhabditida</taxon>
        <taxon>Spirurina</taxon>
        <taxon>Spiruromorpha</taxon>
        <taxon>Filarioidea</taxon>
        <taxon>Onchocercidae</taxon>
        <taxon>Onchocerca</taxon>
    </lineage>
</organism>
<proteinExistence type="evidence at transcript level"/>
<reference key="1">
    <citation type="journal article" date="1990" name="Mol. Biochem. Parasitol.">
        <title>Identification of an Onchocerca volvulus cDNA encoding a low-molecular-weight antigen uniquely recognized by onchocerciasis patient sera.</title>
        <authorList>
            <person name="Lobos E."/>
            <person name="Altmann M."/>
            <person name="Mengod G."/>
            <person name="Weiss N."/>
            <person name="Rudin W."/>
            <person name="Karam M."/>
        </authorList>
    </citation>
    <scope>NUCLEOTIDE SEQUENCE [MRNA]</scope>
</reference>
<sequence length="197" mass="21773">MHCLQVVIAIVLYSFGKISAENANCKKCTPMLVDSAFKEHGIVPDVVSTAPTKLVNVSYNNLTVNLGNELTPTQVKNQPTKVSWDAEPGALYTLVMTDPDAPSRKNPVFREWHHWLIINISGQNVSSGTVLSDYIGSGPRKGTGLHRYVFLVYKQPGSITDTQHGGNRRNFKVMDFANKHHLGNPVAGNFFQAKHED</sequence>
<comment type="tissue specificity">
    <text>Hypodermis, cuticle and uterus.</text>
</comment>
<comment type="similarity">
    <text evidence="2">Belongs to the phosphatidylethanolamine-binding protein family.</text>
</comment>
<comment type="sequence caution" evidence="2">
    <conflict type="frameshift">
        <sequence resource="EMBL-CDS" id="AAA29411"/>
    </conflict>
</comment>
<protein>
    <recommendedName>
        <fullName>OV-16 antigen</fullName>
    </recommendedName>
</protein>
<dbReference type="EMBL" id="M27807">
    <property type="protein sequence ID" value="AAA29411.1"/>
    <property type="status" value="ALT_FRAME"/>
    <property type="molecule type" value="mRNA"/>
</dbReference>
<dbReference type="PIR" id="A44947">
    <property type="entry name" value="A44947"/>
</dbReference>
<dbReference type="PIR" id="PC4215">
    <property type="entry name" value="PC4215"/>
</dbReference>
<dbReference type="PIR" id="PC4216">
    <property type="entry name" value="PC4216"/>
</dbReference>
<dbReference type="SMR" id="P31729"/>
<dbReference type="STRING" id="6282.P31729"/>
<dbReference type="MEROPS" id="I51.002"/>
<dbReference type="GlyCosmos" id="P31729">
    <property type="glycosylation" value="4 sites, No reported glycans"/>
</dbReference>
<dbReference type="HOGENOM" id="CLU_043994_3_0_1"/>
<dbReference type="Proteomes" id="UP000024404">
    <property type="component" value="Unassembled WGS sequence"/>
</dbReference>
<dbReference type="CDD" id="cd00866">
    <property type="entry name" value="PEBP_euk"/>
    <property type="match status" value="1"/>
</dbReference>
<dbReference type="Gene3D" id="3.90.280.10">
    <property type="entry name" value="PEBP-like"/>
    <property type="match status" value="1"/>
</dbReference>
<dbReference type="InterPro" id="IPR008914">
    <property type="entry name" value="PEBP"/>
</dbReference>
<dbReference type="InterPro" id="IPR036610">
    <property type="entry name" value="PEBP-like_sf"/>
</dbReference>
<dbReference type="InterPro" id="IPR035810">
    <property type="entry name" value="PEBP_euk"/>
</dbReference>
<dbReference type="InterPro" id="IPR001858">
    <property type="entry name" value="Phosphatidylethanolamine-bd_CS"/>
</dbReference>
<dbReference type="PANTHER" id="PTHR11362">
    <property type="entry name" value="PHOSPHATIDYLETHANOLAMINE-BINDING PROTEIN"/>
    <property type="match status" value="1"/>
</dbReference>
<dbReference type="PANTHER" id="PTHR11362:SF82">
    <property type="entry name" value="PHOSPHATIDYLETHANOLAMINE-BINDING PROTEIN 4"/>
    <property type="match status" value="1"/>
</dbReference>
<dbReference type="Pfam" id="PF01161">
    <property type="entry name" value="PBP"/>
    <property type="match status" value="1"/>
</dbReference>
<dbReference type="SUPFAM" id="SSF49777">
    <property type="entry name" value="PEBP-like"/>
    <property type="match status" value="1"/>
</dbReference>
<dbReference type="PROSITE" id="PS01220">
    <property type="entry name" value="PBP"/>
    <property type="match status" value="1"/>
</dbReference>
<keyword id="KW-0325">Glycoprotein</keyword>
<keyword id="KW-1185">Reference proteome</keyword>
<keyword id="KW-0732">Signal</keyword>